<protein>
    <recommendedName>
        <fullName evidence="6">Translation initiation factor eIF2 assembly protein</fullName>
    </recommendedName>
    <alternativeName>
        <fullName>Cell division cycle protein 123 homolog</fullName>
    </alternativeName>
</protein>
<evidence type="ECO:0000250" key="1"/>
<evidence type="ECO:0000250" key="2">
    <source>
        <dbReference type="UniProtKB" id="O75794"/>
    </source>
</evidence>
<evidence type="ECO:0000250" key="3">
    <source>
        <dbReference type="UniProtKB" id="Q05791"/>
    </source>
</evidence>
<evidence type="ECO:0000250" key="4">
    <source>
        <dbReference type="UniProtKB" id="Q62834"/>
    </source>
</evidence>
<evidence type="ECO:0000250" key="5">
    <source>
        <dbReference type="UniProtKB" id="Q9P7N5"/>
    </source>
</evidence>
<evidence type="ECO:0000305" key="6"/>
<gene>
    <name type="primary">CDC123</name>
    <name type="ORF">QccE-12339</name>
</gene>
<organism>
    <name type="scientific">Macaca fascicularis</name>
    <name type="common">Crab-eating macaque</name>
    <name type="synonym">Cynomolgus monkey</name>
    <dbReference type="NCBI Taxonomy" id="9541"/>
    <lineage>
        <taxon>Eukaryota</taxon>
        <taxon>Metazoa</taxon>
        <taxon>Chordata</taxon>
        <taxon>Craniata</taxon>
        <taxon>Vertebrata</taxon>
        <taxon>Euteleostomi</taxon>
        <taxon>Mammalia</taxon>
        <taxon>Eutheria</taxon>
        <taxon>Euarchontoglires</taxon>
        <taxon>Primates</taxon>
        <taxon>Haplorrhini</taxon>
        <taxon>Catarrhini</taxon>
        <taxon>Cercopithecidae</taxon>
        <taxon>Cercopithecinae</taxon>
        <taxon>Macaca</taxon>
    </lineage>
</organism>
<comment type="function">
    <text evidence="2 3">ATP-dependent protein-folding chaperone for the eIF2 complex (By similarity). Binds to the gamma subunit of the eIF2 complex which allows the subunit to assemble with the alpha and beta subunits (By similarity).</text>
</comment>
<comment type="subunit">
    <text evidence="2">Interacts with the eIF2 complex gamma subunit EIF2S3 (via C-terminus); the interaction is direct. Interacts with the eIF2 complex alpha subunit EIF2S1. Interacts with the eIF2 complex beta subunit EIF2S2.</text>
</comment>
<comment type="subcellular location">
    <subcellularLocation>
        <location evidence="4">Cytoplasm</location>
    </subcellularLocation>
</comment>
<comment type="PTM">
    <text evidence="1">Phosphorylated.</text>
</comment>
<comment type="similarity">
    <text evidence="6">Belongs to the CDC123 family.</text>
</comment>
<proteinExistence type="evidence at transcript level"/>
<dbReference type="EMBL" id="AB220400">
    <property type="protein sequence ID" value="BAE72933.1"/>
    <property type="molecule type" value="mRNA"/>
</dbReference>
<dbReference type="RefSeq" id="NP_001271660.1">
    <property type="nucleotide sequence ID" value="NM_001284731.1"/>
</dbReference>
<dbReference type="RefSeq" id="XP_045255481.1">
    <property type="nucleotide sequence ID" value="XM_045399546.2"/>
</dbReference>
<dbReference type="SMR" id="Q2PG37"/>
<dbReference type="STRING" id="9541.ENSMFAP00000007468"/>
<dbReference type="Ensembl" id="ENSMFAT00000026158.2">
    <property type="protein sequence ID" value="ENSMFAP00000007468.1"/>
    <property type="gene ID" value="ENSMFAG00000036128.2"/>
</dbReference>
<dbReference type="GeneID" id="102117547"/>
<dbReference type="VEuPathDB" id="HostDB:ENSMFAG00000036128"/>
<dbReference type="eggNOG" id="KOG2983">
    <property type="taxonomic scope" value="Eukaryota"/>
</dbReference>
<dbReference type="GeneTree" id="ENSGT00390000003057"/>
<dbReference type="OMA" id="TFPDPNF"/>
<dbReference type="Proteomes" id="UP000233100">
    <property type="component" value="Chromosome 9"/>
</dbReference>
<dbReference type="Bgee" id="ENSMFAG00000036128">
    <property type="expression patterns" value="Expressed in skeletal muscle tissue and 13 other cell types or tissues"/>
</dbReference>
<dbReference type="GO" id="GO:0005737">
    <property type="term" value="C:cytoplasm"/>
    <property type="evidence" value="ECO:0000250"/>
    <property type="project" value="UniProtKB"/>
</dbReference>
<dbReference type="GO" id="GO:0005524">
    <property type="term" value="F:ATP binding"/>
    <property type="evidence" value="ECO:0000250"/>
    <property type="project" value="UniProtKB"/>
</dbReference>
<dbReference type="GO" id="GO:0000287">
    <property type="term" value="F:magnesium ion binding"/>
    <property type="evidence" value="ECO:0000250"/>
    <property type="project" value="UniProtKB"/>
</dbReference>
<dbReference type="GO" id="GO:0044183">
    <property type="term" value="F:protein folding chaperone"/>
    <property type="evidence" value="ECO:0000250"/>
    <property type="project" value="UniProtKB"/>
</dbReference>
<dbReference type="GO" id="GO:1905143">
    <property type="term" value="P:eukaryotic translation initiation factor 2 complex assembly"/>
    <property type="evidence" value="ECO:0000250"/>
    <property type="project" value="UniProtKB"/>
</dbReference>
<dbReference type="InterPro" id="IPR009772">
    <property type="entry name" value="CDC123"/>
</dbReference>
<dbReference type="PANTHER" id="PTHR15323:SF6">
    <property type="entry name" value="CELL DIVISION CYCLE PROTEIN 123 HOMOLOG"/>
    <property type="match status" value="1"/>
</dbReference>
<dbReference type="PANTHER" id="PTHR15323">
    <property type="entry name" value="D123 PROTEIN"/>
    <property type="match status" value="1"/>
</dbReference>
<dbReference type="Pfam" id="PF07065">
    <property type="entry name" value="D123"/>
    <property type="match status" value="1"/>
</dbReference>
<dbReference type="PIRSF" id="PIRSF007807">
    <property type="entry name" value="Cdc123"/>
    <property type="match status" value="1"/>
</dbReference>
<accession>Q2PG37</accession>
<keyword id="KW-0067">ATP-binding</keyword>
<keyword id="KW-0143">Chaperone</keyword>
<keyword id="KW-0963">Cytoplasm</keyword>
<keyword id="KW-0460">Magnesium</keyword>
<keyword id="KW-0479">Metal-binding</keyword>
<keyword id="KW-0547">Nucleotide-binding</keyword>
<keyword id="KW-0597">Phosphoprotein</keyword>
<keyword id="KW-1185">Reference proteome</keyword>
<sequence length="336" mass="39048">MKKEHVLHCQFSAWYPLFRGVTIKSVILPLPQNVKDYLLDDGTLVVSGRDDPPTHSQPDSDDEAEEIQWSDDENTATLTAPEFPEFATQVQEAINSLGGSVFPKLNWSAPRDAYWIAMNSSLKCKTLSDIFLLFKSSDFITRDFTQPFIHCTDDSPDPCIEYELVLRKWCELIPGAEFRCFVKENKLIGISQRDYTQYYDHISKQKEEICRCIQDFFKKHIQYKFLDEDFVFDIYRDSRGKVWLIDFNPFGEVTDSLLFTWEELISENNLNGDFSEVDAQEQDSPAFRCTNSEVTVQPSPYLSYRLPKDFVDLSTGEDAHKLIDFLKLKRNQQEDD</sequence>
<reference key="1">
    <citation type="submission" date="2005-06" db="EMBL/GenBank/DDBJ databases">
        <title>DNA sequences of macaque genes expressed in brain or testis and its evolutionary implications.</title>
        <authorList>
            <consortium name="International consortium for macaque cDNA sequencing and analysis"/>
        </authorList>
    </citation>
    <scope>NUCLEOTIDE SEQUENCE [LARGE SCALE MRNA]</scope>
    <source>
        <tissue>Brain cortex</tissue>
    </source>
</reference>
<feature type="chain" id="PRO_0000228663" description="Translation initiation factor eIF2 assembly protein">
    <location>
        <begin position="1"/>
        <end position="336"/>
    </location>
</feature>
<feature type="binding site" evidence="2">
    <location>
        <position position="104"/>
    </location>
    <ligand>
        <name>ATP</name>
        <dbReference type="ChEBI" id="CHEBI:30616"/>
    </ligand>
</feature>
<feature type="binding site" evidence="2">
    <location>
        <position position="107"/>
    </location>
    <ligand>
        <name>ATP</name>
        <dbReference type="ChEBI" id="CHEBI:30616"/>
    </ligand>
</feature>
<feature type="binding site" evidence="2">
    <location>
        <position position="109"/>
    </location>
    <ligand>
        <name>ATP</name>
        <dbReference type="ChEBI" id="CHEBI:30616"/>
    </ligand>
</feature>
<feature type="binding site" evidence="5">
    <location>
        <position position="111"/>
    </location>
    <ligand>
        <name>ATP</name>
        <dbReference type="ChEBI" id="CHEBI:30616"/>
    </ligand>
</feature>
<feature type="binding site" evidence="5">
    <location>
        <position position="167"/>
    </location>
    <ligand>
        <name>ATP</name>
        <dbReference type="ChEBI" id="CHEBI:30616"/>
    </ligand>
</feature>
<feature type="binding site" evidence="2">
    <location>
        <position position="168"/>
    </location>
    <ligand>
        <name>ATP</name>
        <dbReference type="ChEBI" id="CHEBI:30616"/>
    </ligand>
</feature>
<feature type="binding site" evidence="5">
    <location>
        <position position="169"/>
    </location>
    <ligand>
        <name>ATP</name>
        <dbReference type="ChEBI" id="CHEBI:30616"/>
    </ligand>
</feature>
<feature type="binding site" evidence="2">
    <location>
        <position position="170"/>
    </location>
    <ligand>
        <name>ATP</name>
        <dbReference type="ChEBI" id="CHEBI:30616"/>
    </ligand>
</feature>
<feature type="binding site" evidence="2">
    <location>
        <position position="177"/>
    </location>
    <ligand>
        <name>ATP</name>
        <dbReference type="ChEBI" id="CHEBI:30616"/>
    </ligand>
</feature>
<feature type="binding site" evidence="2">
    <location>
        <position position="179"/>
    </location>
    <ligand>
        <name>ATP</name>
        <dbReference type="ChEBI" id="CHEBI:30616"/>
    </ligand>
</feature>
<feature type="binding site" evidence="2">
    <location>
        <position position="193"/>
    </location>
    <ligand>
        <name>ATP</name>
        <dbReference type="ChEBI" id="CHEBI:30616"/>
    </ligand>
</feature>
<feature type="binding site" evidence="5">
    <location>
        <position position="233"/>
    </location>
    <ligand>
        <name>ATP</name>
        <dbReference type="ChEBI" id="CHEBI:30616"/>
    </ligand>
</feature>
<feature type="binding site" evidence="2">
    <location>
        <position position="246"/>
    </location>
    <ligand>
        <name>ATP</name>
        <dbReference type="ChEBI" id="CHEBI:30616"/>
    </ligand>
</feature>
<feature type="binding site" evidence="2">
    <location>
        <position position="246"/>
    </location>
    <ligand>
        <name>Mg(2+)</name>
        <dbReference type="ChEBI" id="CHEBI:18420"/>
    </ligand>
</feature>
<feature type="binding site" evidence="2">
    <location>
        <position position="248"/>
    </location>
    <ligand>
        <name>ATP</name>
        <dbReference type="ChEBI" id="CHEBI:30616"/>
    </ligand>
</feature>
<feature type="binding site" evidence="2">
    <location>
        <position position="248"/>
    </location>
    <ligand>
        <name>Mg(2+)</name>
        <dbReference type="ChEBI" id="CHEBI:18420"/>
    </ligand>
</feature>
<feature type="modified residue" description="Phosphoserine" evidence="2">
    <location>
        <position position="60"/>
    </location>
</feature>
<name>CD123_MACFA</name>